<evidence type="ECO:0000250" key="1"/>
<evidence type="ECO:0000305" key="2"/>
<dbReference type="EC" id="3.2.1.-"/>
<dbReference type="EMBL" id="AP006841">
    <property type="protein sequence ID" value="BAD47705.1"/>
    <property type="molecule type" value="Genomic_DNA"/>
</dbReference>
<dbReference type="RefSeq" id="WP_011202216.1">
    <property type="nucleotide sequence ID" value="NC_006347.1"/>
</dbReference>
<dbReference type="RefSeq" id="YP_098239.1">
    <property type="nucleotide sequence ID" value="NC_006347.1"/>
</dbReference>
<dbReference type="SMR" id="Q64XS1"/>
<dbReference type="STRING" id="295405.BF0955"/>
<dbReference type="CAZy" id="GH109">
    <property type="family name" value="Glycoside Hydrolase Family 109"/>
</dbReference>
<dbReference type="KEGG" id="bfr:BF0955"/>
<dbReference type="PATRIC" id="fig|295405.11.peg.956"/>
<dbReference type="HOGENOM" id="CLU_046965_0_0_10"/>
<dbReference type="OrthoDB" id="9771072at2"/>
<dbReference type="Proteomes" id="UP000002197">
    <property type="component" value="Chromosome"/>
</dbReference>
<dbReference type="GO" id="GO:0016798">
    <property type="term" value="F:hydrolase activity, acting on glycosyl bonds"/>
    <property type="evidence" value="ECO:0007669"/>
    <property type="project" value="UniProtKB-KW"/>
</dbReference>
<dbReference type="GO" id="GO:0000166">
    <property type="term" value="F:nucleotide binding"/>
    <property type="evidence" value="ECO:0007669"/>
    <property type="project" value="InterPro"/>
</dbReference>
<dbReference type="Gene3D" id="3.30.360.10">
    <property type="entry name" value="Dihydrodipicolinate Reductase, domain 2"/>
    <property type="match status" value="1"/>
</dbReference>
<dbReference type="Gene3D" id="3.40.50.720">
    <property type="entry name" value="NAD(P)-binding Rossmann-like Domain"/>
    <property type="match status" value="1"/>
</dbReference>
<dbReference type="InterPro" id="IPR000683">
    <property type="entry name" value="Gfo/Idh/MocA-like_OxRdtase_N"/>
</dbReference>
<dbReference type="InterPro" id="IPR050463">
    <property type="entry name" value="Gfo/Idh/MocA_oxidrdct_glycsds"/>
</dbReference>
<dbReference type="InterPro" id="IPR049303">
    <property type="entry name" value="Glyco_hydro_109_C"/>
</dbReference>
<dbReference type="InterPro" id="IPR036291">
    <property type="entry name" value="NAD(P)-bd_dom_sf"/>
</dbReference>
<dbReference type="PANTHER" id="PTHR43818">
    <property type="entry name" value="BCDNA.GH03377"/>
    <property type="match status" value="1"/>
</dbReference>
<dbReference type="PANTHER" id="PTHR43818:SF1">
    <property type="entry name" value="GLYCOSYL HYDROLASE FAMILY 109 PROTEIN"/>
    <property type="match status" value="1"/>
</dbReference>
<dbReference type="Pfam" id="PF01408">
    <property type="entry name" value="GFO_IDH_MocA"/>
    <property type="match status" value="1"/>
</dbReference>
<dbReference type="Pfam" id="PF21252">
    <property type="entry name" value="Glyco_hydro_109_C"/>
    <property type="match status" value="1"/>
</dbReference>
<dbReference type="SUPFAM" id="SSF51735">
    <property type="entry name" value="NAD(P)-binding Rossmann-fold domains"/>
    <property type="match status" value="1"/>
</dbReference>
<accession>Q64XS1</accession>
<reference key="1">
    <citation type="journal article" date="2004" name="Proc. Natl. Acad. Sci. U.S.A.">
        <title>Genomic analysis of Bacteroides fragilis reveals extensive DNA inversions regulating cell surface adaptation.</title>
        <authorList>
            <person name="Kuwahara T."/>
            <person name="Yamashita A."/>
            <person name="Hirakawa H."/>
            <person name="Nakayama H."/>
            <person name="Toh H."/>
            <person name="Okada N."/>
            <person name="Kuhara S."/>
            <person name="Hattori M."/>
            <person name="Hayashi T."/>
            <person name="Ohnishi Y."/>
        </authorList>
    </citation>
    <scope>NUCLEOTIDE SEQUENCE [LARGE SCALE GENOMIC DNA]</scope>
    <source>
        <strain>YCH46</strain>
    </source>
</reference>
<proteinExistence type="inferred from homology"/>
<organism>
    <name type="scientific">Bacteroides fragilis (strain YCH46)</name>
    <dbReference type="NCBI Taxonomy" id="295405"/>
    <lineage>
        <taxon>Bacteria</taxon>
        <taxon>Pseudomonadati</taxon>
        <taxon>Bacteroidota</taxon>
        <taxon>Bacteroidia</taxon>
        <taxon>Bacteroidales</taxon>
        <taxon>Bacteroidaceae</taxon>
        <taxon>Bacteroides</taxon>
    </lineage>
</organism>
<comment type="function">
    <text evidence="1">Glycosidase.</text>
</comment>
<comment type="cofactor">
    <cofactor evidence="1">
        <name>NAD(+)</name>
        <dbReference type="ChEBI" id="CHEBI:57540"/>
    </cofactor>
    <text evidence="1">Binds 1 NAD(+) per subunit. The NAD(+) cannot dissociate.</text>
</comment>
<comment type="similarity">
    <text evidence="2">Belongs to the Gfo/Idh/MocA family. Glycosyl hydrolase 109 subfamily.</text>
</comment>
<protein>
    <recommendedName>
        <fullName>Glycosyl hydrolase family 109 protein 2</fullName>
        <ecNumber>3.2.1.-</ecNumber>
    </recommendedName>
</protein>
<gene>
    <name type="ordered locus">BF0955</name>
</gene>
<keyword id="KW-0326">Glycosidase</keyword>
<keyword id="KW-0378">Hydrolase</keyword>
<keyword id="KW-0520">NAD</keyword>
<name>G1092_BACFR</name>
<feature type="chain" id="PRO_0000348550" description="Glycosyl hydrolase family 109 protein 2">
    <location>
        <begin position="1"/>
        <end position="425"/>
    </location>
</feature>
<feature type="binding site" evidence="1">
    <location>
        <begin position="29"/>
        <end position="30"/>
    </location>
    <ligand>
        <name>NAD(+)</name>
        <dbReference type="ChEBI" id="CHEBI:57540"/>
    </ligand>
</feature>
<feature type="binding site" evidence="1">
    <location>
        <position position="51"/>
    </location>
    <ligand>
        <name>NAD(+)</name>
        <dbReference type="ChEBI" id="CHEBI:57540"/>
    </ligand>
</feature>
<feature type="binding site" evidence="1">
    <location>
        <begin position="99"/>
        <end position="102"/>
    </location>
    <ligand>
        <name>NAD(+)</name>
        <dbReference type="ChEBI" id="CHEBI:57540"/>
    </ligand>
</feature>
<feature type="binding site" evidence="1">
    <location>
        <begin position="119"/>
        <end position="120"/>
    </location>
    <ligand>
        <name>NAD(+)</name>
        <dbReference type="ChEBI" id="CHEBI:57540"/>
    </ligand>
</feature>
<feature type="binding site" evidence="1">
    <location>
        <position position="148"/>
    </location>
    <ligand>
        <name>NAD(+)</name>
        <dbReference type="ChEBI" id="CHEBI:57540"/>
    </ligand>
</feature>
<feature type="binding site" evidence="1">
    <location>
        <position position="177"/>
    </location>
    <ligand>
        <name>substrate</name>
    </ligand>
</feature>
<feature type="binding site" evidence="1">
    <location>
        <begin position="194"/>
        <end position="198"/>
    </location>
    <ligand>
        <name>NAD(+)</name>
        <dbReference type="ChEBI" id="CHEBI:57540"/>
    </ligand>
</feature>
<feature type="binding site" evidence="1">
    <location>
        <begin position="211"/>
        <end position="214"/>
    </location>
    <ligand>
        <name>substrate</name>
    </ligand>
</feature>
<feature type="binding site" evidence="1">
    <location>
        <position position="211"/>
    </location>
    <ligand>
        <name>NAD(+)</name>
        <dbReference type="ChEBI" id="CHEBI:57540"/>
    </ligand>
</feature>
<feature type="binding site" evidence="1">
    <location>
        <position position="293"/>
    </location>
    <ligand>
        <name>substrate</name>
    </ligand>
</feature>
<sequence>MKTPSQTHVLGLAHPPLPMVRLAFIGLGNRGVLTLQRYLQIEGVEIKALCEIREGNLVKAQKILREAGYPQPDGYTGPDGWKRMCERDDIDLVFICTDWLTHTPMAVYSMEHGKHVAIEVPAAMTVEECWKLVDTAEKTRQHCMMLENCCYDPFALTTLNMAQQGAFGEITHVEGAYIHDLRSIYFADESKGGFHNHWGKKYSIEHTGNPYPTHGLGPVCQILNIHRGDRMNYLVSLSSLQAGMTEYARKNFGADSPEARQKYLLGDMNTTLIQTVKGKSIMIQYNVVTPRPYSRLHTVCGTKGFAQKYPVPSIALEPDAGSPLEGKALEEIMERYKHPFTATFGTEAHRRNLPNEMNYVMDCRLIYCLRNGLPLDMDVYDAAEWSCITELSEQSVLNGSIPVEIPDFTRGAWKKCHISRTSDLY</sequence>